<organism>
    <name type="scientific">Heliobacterium modesticaldum (strain ATCC 51547 / Ice1)</name>
    <dbReference type="NCBI Taxonomy" id="498761"/>
    <lineage>
        <taxon>Bacteria</taxon>
        <taxon>Bacillati</taxon>
        <taxon>Bacillota</taxon>
        <taxon>Clostridia</taxon>
        <taxon>Eubacteriales</taxon>
        <taxon>Heliobacteriaceae</taxon>
        <taxon>Heliomicrobium</taxon>
    </lineage>
</organism>
<accession>B0TGQ3</accession>
<proteinExistence type="inferred from homology"/>
<name>PYRB_HELMI</name>
<sequence>MAWQHKDLLGLRGLAKQEIELILDTAAPMKDIIGRDIKKVPTLRGKSIVCLFYEASTRTRTSFELAGKFMSADTVNIAAASSSVVKGESLIDTGKTLDAMGTDIIVIRHAASGAPHLLAKHVKARVVNAGDGAHEHPTQGLLDLYTIKERKGRLEGLTVTILGDVLHSRVARSNIWGLRTMGAEVRLCGPSTLLPPELAITGVKVFTRIEEALEGADVVNVLRLQLERQKKGLFPTIREYARQFGLNQERLKRCKSDVLVLHPGPMNRGVEIADDVADADFAAIEEQVTNGVAVRMAILYLMMGGSGSGAVH</sequence>
<evidence type="ECO:0000255" key="1">
    <source>
        <dbReference type="HAMAP-Rule" id="MF_00001"/>
    </source>
</evidence>
<keyword id="KW-0665">Pyrimidine biosynthesis</keyword>
<keyword id="KW-1185">Reference proteome</keyword>
<keyword id="KW-0808">Transferase</keyword>
<dbReference type="EC" id="2.1.3.2" evidence="1"/>
<dbReference type="EMBL" id="CP000930">
    <property type="protein sequence ID" value="ABZ84664.1"/>
    <property type="molecule type" value="Genomic_DNA"/>
</dbReference>
<dbReference type="RefSeq" id="WP_012283164.1">
    <property type="nucleotide sequence ID" value="NC_010337.2"/>
</dbReference>
<dbReference type="SMR" id="B0TGQ3"/>
<dbReference type="STRING" id="498761.HM1_2107"/>
<dbReference type="KEGG" id="hmo:HM1_2107"/>
<dbReference type="eggNOG" id="COG0540">
    <property type="taxonomic scope" value="Bacteria"/>
</dbReference>
<dbReference type="HOGENOM" id="CLU_043846_2_0_9"/>
<dbReference type="OrthoDB" id="9802587at2"/>
<dbReference type="UniPathway" id="UPA00070">
    <property type="reaction ID" value="UER00116"/>
</dbReference>
<dbReference type="Proteomes" id="UP000008550">
    <property type="component" value="Chromosome"/>
</dbReference>
<dbReference type="GO" id="GO:0005829">
    <property type="term" value="C:cytosol"/>
    <property type="evidence" value="ECO:0007669"/>
    <property type="project" value="TreeGrafter"/>
</dbReference>
<dbReference type="GO" id="GO:0016597">
    <property type="term" value="F:amino acid binding"/>
    <property type="evidence" value="ECO:0007669"/>
    <property type="project" value="InterPro"/>
</dbReference>
<dbReference type="GO" id="GO:0004070">
    <property type="term" value="F:aspartate carbamoyltransferase activity"/>
    <property type="evidence" value="ECO:0007669"/>
    <property type="project" value="UniProtKB-UniRule"/>
</dbReference>
<dbReference type="GO" id="GO:0006207">
    <property type="term" value="P:'de novo' pyrimidine nucleobase biosynthetic process"/>
    <property type="evidence" value="ECO:0007669"/>
    <property type="project" value="InterPro"/>
</dbReference>
<dbReference type="GO" id="GO:0044205">
    <property type="term" value="P:'de novo' UMP biosynthetic process"/>
    <property type="evidence" value="ECO:0007669"/>
    <property type="project" value="UniProtKB-UniRule"/>
</dbReference>
<dbReference type="GO" id="GO:0006520">
    <property type="term" value="P:amino acid metabolic process"/>
    <property type="evidence" value="ECO:0007669"/>
    <property type="project" value="InterPro"/>
</dbReference>
<dbReference type="FunFam" id="3.40.50.1370:FF:000007">
    <property type="entry name" value="Aspartate carbamoyltransferase"/>
    <property type="match status" value="1"/>
</dbReference>
<dbReference type="Gene3D" id="3.40.50.1370">
    <property type="entry name" value="Aspartate/ornithine carbamoyltransferase"/>
    <property type="match status" value="2"/>
</dbReference>
<dbReference type="HAMAP" id="MF_00001">
    <property type="entry name" value="Asp_carb_tr"/>
    <property type="match status" value="1"/>
</dbReference>
<dbReference type="InterPro" id="IPR006132">
    <property type="entry name" value="Asp/Orn_carbamoyltranf_P-bd"/>
</dbReference>
<dbReference type="InterPro" id="IPR006130">
    <property type="entry name" value="Asp/Orn_carbamoylTrfase"/>
</dbReference>
<dbReference type="InterPro" id="IPR036901">
    <property type="entry name" value="Asp/Orn_carbamoylTrfase_sf"/>
</dbReference>
<dbReference type="InterPro" id="IPR002082">
    <property type="entry name" value="Asp_carbamoyltransf"/>
</dbReference>
<dbReference type="InterPro" id="IPR006131">
    <property type="entry name" value="Asp_carbamoyltransf_Asp/Orn-bd"/>
</dbReference>
<dbReference type="NCBIfam" id="TIGR00670">
    <property type="entry name" value="asp_carb_tr"/>
    <property type="match status" value="1"/>
</dbReference>
<dbReference type="NCBIfam" id="NF002032">
    <property type="entry name" value="PRK00856.1"/>
    <property type="match status" value="1"/>
</dbReference>
<dbReference type="PANTHER" id="PTHR45753:SF6">
    <property type="entry name" value="ASPARTATE CARBAMOYLTRANSFERASE"/>
    <property type="match status" value="1"/>
</dbReference>
<dbReference type="PANTHER" id="PTHR45753">
    <property type="entry name" value="ORNITHINE CARBAMOYLTRANSFERASE, MITOCHONDRIAL"/>
    <property type="match status" value="1"/>
</dbReference>
<dbReference type="Pfam" id="PF00185">
    <property type="entry name" value="OTCace"/>
    <property type="match status" value="1"/>
</dbReference>
<dbReference type="Pfam" id="PF02729">
    <property type="entry name" value="OTCace_N"/>
    <property type="match status" value="1"/>
</dbReference>
<dbReference type="PRINTS" id="PR00100">
    <property type="entry name" value="AOTCASE"/>
</dbReference>
<dbReference type="PRINTS" id="PR00101">
    <property type="entry name" value="ATCASE"/>
</dbReference>
<dbReference type="SUPFAM" id="SSF53671">
    <property type="entry name" value="Aspartate/ornithine carbamoyltransferase"/>
    <property type="match status" value="1"/>
</dbReference>
<dbReference type="PROSITE" id="PS00097">
    <property type="entry name" value="CARBAMOYLTRANSFERASE"/>
    <property type="match status" value="1"/>
</dbReference>
<protein>
    <recommendedName>
        <fullName evidence="1">Aspartate carbamoyltransferase catalytic subunit</fullName>
        <ecNumber evidence="1">2.1.3.2</ecNumber>
    </recommendedName>
    <alternativeName>
        <fullName evidence="1">Aspartate transcarbamylase</fullName>
        <shortName evidence="1">ATCase</shortName>
    </alternativeName>
</protein>
<comment type="function">
    <text evidence="1">Catalyzes the condensation of carbamoyl phosphate and aspartate to form carbamoyl aspartate and inorganic phosphate, the committed step in the de novo pyrimidine nucleotide biosynthesis pathway.</text>
</comment>
<comment type="catalytic activity">
    <reaction evidence="1">
        <text>carbamoyl phosphate + L-aspartate = N-carbamoyl-L-aspartate + phosphate + H(+)</text>
        <dbReference type="Rhea" id="RHEA:20013"/>
        <dbReference type="ChEBI" id="CHEBI:15378"/>
        <dbReference type="ChEBI" id="CHEBI:29991"/>
        <dbReference type="ChEBI" id="CHEBI:32814"/>
        <dbReference type="ChEBI" id="CHEBI:43474"/>
        <dbReference type="ChEBI" id="CHEBI:58228"/>
        <dbReference type="EC" id="2.1.3.2"/>
    </reaction>
</comment>
<comment type="pathway">
    <text evidence="1">Pyrimidine metabolism; UMP biosynthesis via de novo pathway; (S)-dihydroorotate from bicarbonate: step 2/3.</text>
</comment>
<comment type="subunit">
    <text evidence="1">Heterododecamer (2C3:3R2) of six catalytic PyrB chains organized as two trimers (C3), and six regulatory PyrI chains organized as three dimers (R2).</text>
</comment>
<comment type="similarity">
    <text evidence="1">Belongs to the aspartate/ornithine carbamoyltransferase superfamily. ATCase family.</text>
</comment>
<reference key="1">
    <citation type="journal article" date="2008" name="J. Bacteriol.">
        <title>The genome of Heliobacterium modesticaldum, a phototrophic representative of the Firmicutes containing the simplest photosynthetic apparatus.</title>
        <authorList>
            <person name="Sattley W.M."/>
            <person name="Madigan M.T."/>
            <person name="Swingley W.D."/>
            <person name="Cheung P.C."/>
            <person name="Clocksin K.M."/>
            <person name="Conrad A.L."/>
            <person name="Dejesa L.C."/>
            <person name="Honchak B.M."/>
            <person name="Jung D.O."/>
            <person name="Karbach L.E."/>
            <person name="Kurdoglu A."/>
            <person name="Lahiri S."/>
            <person name="Mastrian S.D."/>
            <person name="Page L.E."/>
            <person name="Taylor H.L."/>
            <person name="Wang Z.T."/>
            <person name="Raymond J."/>
            <person name="Chen M."/>
            <person name="Blankenship R.E."/>
            <person name="Touchman J.W."/>
        </authorList>
    </citation>
    <scope>NUCLEOTIDE SEQUENCE [LARGE SCALE GENOMIC DNA]</scope>
    <source>
        <strain>ATCC 51547 / Ice1</strain>
    </source>
</reference>
<feature type="chain" id="PRO_1000088767" description="Aspartate carbamoyltransferase catalytic subunit">
    <location>
        <begin position="1"/>
        <end position="312"/>
    </location>
</feature>
<feature type="binding site" evidence="1">
    <location>
        <position position="58"/>
    </location>
    <ligand>
        <name>carbamoyl phosphate</name>
        <dbReference type="ChEBI" id="CHEBI:58228"/>
    </ligand>
</feature>
<feature type="binding site" evidence="1">
    <location>
        <position position="59"/>
    </location>
    <ligand>
        <name>carbamoyl phosphate</name>
        <dbReference type="ChEBI" id="CHEBI:58228"/>
    </ligand>
</feature>
<feature type="binding site" evidence="1">
    <location>
        <position position="86"/>
    </location>
    <ligand>
        <name>L-aspartate</name>
        <dbReference type="ChEBI" id="CHEBI:29991"/>
    </ligand>
</feature>
<feature type="binding site" evidence="1">
    <location>
        <position position="108"/>
    </location>
    <ligand>
        <name>carbamoyl phosphate</name>
        <dbReference type="ChEBI" id="CHEBI:58228"/>
    </ligand>
</feature>
<feature type="binding site" evidence="1">
    <location>
        <position position="136"/>
    </location>
    <ligand>
        <name>carbamoyl phosphate</name>
        <dbReference type="ChEBI" id="CHEBI:58228"/>
    </ligand>
</feature>
<feature type="binding site" evidence="1">
    <location>
        <position position="139"/>
    </location>
    <ligand>
        <name>carbamoyl phosphate</name>
        <dbReference type="ChEBI" id="CHEBI:58228"/>
    </ligand>
</feature>
<feature type="binding site" evidence="1">
    <location>
        <position position="169"/>
    </location>
    <ligand>
        <name>L-aspartate</name>
        <dbReference type="ChEBI" id="CHEBI:29991"/>
    </ligand>
</feature>
<feature type="binding site" evidence="1">
    <location>
        <position position="223"/>
    </location>
    <ligand>
        <name>L-aspartate</name>
        <dbReference type="ChEBI" id="CHEBI:29991"/>
    </ligand>
</feature>
<feature type="binding site" evidence="1">
    <location>
        <position position="264"/>
    </location>
    <ligand>
        <name>carbamoyl phosphate</name>
        <dbReference type="ChEBI" id="CHEBI:58228"/>
    </ligand>
</feature>
<feature type="binding site" evidence="1">
    <location>
        <position position="265"/>
    </location>
    <ligand>
        <name>carbamoyl phosphate</name>
        <dbReference type="ChEBI" id="CHEBI:58228"/>
    </ligand>
</feature>
<gene>
    <name evidence="1" type="primary">pyrB</name>
    <name type="ordered locus">Helmi_20390</name>
    <name type="ORF">HM1_2107</name>
</gene>